<comment type="catalytic activity">
    <reaction evidence="1">
        <text>(2R)-O-phospho-3-sulfolactate + H2O = (2R)-3-sulfolactate + phosphate</text>
        <dbReference type="Rhea" id="RHEA:23416"/>
        <dbReference type="ChEBI" id="CHEBI:15377"/>
        <dbReference type="ChEBI" id="CHEBI:15597"/>
        <dbReference type="ChEBI" id="CHEBI:43474"/>
        <dbReference type="ChEBI" id="CHEBI:58738"/>
        <dbReference type="EC" id="3.1.3.71"/>
    </reaction>
</comment>
<comment type="cofactor">
    <cofactor evidence="1">
        <name>Mg(2+)</name>
        <dbReference type="ChEBI" id="CHEBI:18420"/>
    </cofactor>
</comment>
<comment type="similarity">
    <text evidence="1">Belongs to the ComB family.</text>
</comment>
<organism>
    <name type="scientific">Prochlorococcus marinus (strain MIT 9303)</name>
    <dbReference type="NCBI Taxonomy" id="59922"/>
    <lineage>
        <taxon>Bacteria</taxon>
        <taxon>Bacillati</taxon>
        <taxon>Cyanobacteriota</taxon>
        <taxon>Cyanophyceae</taxon>
        <taxon>Synechococcales</taxon>
        <taxon>Prochlorococcaceae</taxon>
        <taxon>Prochlorococcus</taxon>
    </lineage>
</organism>
<dbReference type="EC" id="3.1.3.71" evidence="1"/>
<dbReference type="EMBL" id="CP000554">
    <property type="protein sequence ID" value="ABM78633.1"/>
    <property type="molecule type" value="Genomic_DNA"/>
</dbReference>
<dbReference type="RefSeq" id="WP_011826516.1">
    <property type="nucleotide sequence ID" value="NC_008820.1"/>
</dbReference>
<dbReference type="SMR" id="A2CAX3"/>
<dbReference type="STRING" id="59922.P9303_18911"/>
<dbReference type="KEGG" id="pmf:P9303_18911"/>
<dbReference type="HOGENOM" id="CLU_070028_0_1_3"/>
<dbReference type="BioCyc" id="PMAR59922:G1G80-1640-MONOMER"/>
<dbReference type="Proteomes" id="UP000002274">
    <property type="component" value="Chromosome"/>
</dbReference>
<dbReference type="GO" id="GO:0050532">
    <property type="term" value="F:2-phosphosulfolactate phosphatase activity"/>
    <property type="evidence" value="ECO:0007669"/>
    <property type="project" value="UniProtKB-UniRule"/>
</dbReference>
<dbReference type="GO" id="GO:0000287">
    <property type="term" value="F:magnesium ion binding"/>
    <property type="evidence" value="ECO:0007669"/>
    <property type="project" value="UniProtKB-UniRule"/>
</dbReference>
<dbReference type="GO" id="GO:0050545">
    <property type="term" value="F:sulfopyruvate decarboxylase activity"/>
    <property type="evidence" value="ECO:0007669"/>
    <property type="project" value="TreeGrafter"/>
</dbReference>
<dbReference type="FunFam" id="3.90.1560.10:FF:000001">
    <property type="entry name" value="Probable 2-phosphosulfolactate phosphatase"/>
    <property type="match status" value="1"/>
</dbReference>
<dbReference type="Gene3D" id="3.90.1560.10">
    <property type="entry name" value="ComB-like"/>
    <property type="match status" value="1"/>
</dbReference>
<dbReference type="HAMAP" id="MF_00490">
    <property type="entry name" value="ComB"/>
    <property type="match status" value="1"/>
</dbReference>
<dbReference type="InterPro" id="IPR005238">
    <property type="entry name" value="ComB-like"/>
</dbReference>
<dbReference type="InterPro" id="IPR036702">
    <property type="entry name" value="ComB-like_sf"/>
</dbReference>
<dbReference type="NCBIfam" id="NF002053">
    <property type="entry name" value="PRK00886.1-2"/>
    <property type="match status" value="1"/>
</dbReference>
<dbReference type="PANTHER" id="PTHR37311">
    <property type="entry name" value="2-PHOSPHOSULFOLACTATE PHOSPHATASE-RELATED"/>
    <property type="match status" value="1"/>
</dbReference>
<dbReference type="PANTHER" id="PTHR37311:SF1">
    <property type="entry name" value="2-PHOSPHOSULFOLACTATE PHOSPHATASE-RELATED"/>
    <property type="match status" value="1"/>
</dbReference>
<dbReference type="Pfam" id="PF04029">
    <property type="entry name" value="2-ph_phosp"/>
    <property type="match status" value="1"/>
</dbReference>
<dbReference type="SUPFAM" id="SSF142823">
    <property type="entry name" value="ComB-like"/>
    <property type="match status" value="1"/>
</dbReference>
<feature type="chain" id="PRO_1000014467" description="Probable 2-phosphosulfolactate phosphatase">
    <location>
        <begin position="1"/>
        <end position="243"/>
    </location>
</feature>
<evidence type="ECO:0000255" key="1">
    <source>
        <dbReference type="HAMAP-Rule" id="MF_00490"/>
    </source>
</evidence>
<gene>
    <name evidence="1" type="primary">comB</name>
    <name type="ordered locus">P9303_18911</name>
</gene>
<keyword id="KW-0378">Hydrolase</keyword>
<keyword id="KW-0460">Magnesium</keyword>
<protein>
    <recommendedName>
        <fullName evidence="1">Probable 2-phosphosulfolactate phosphatase</fullName>
        <ecNumber evidence="1">3.1.3.71</ecNumber>
    </recommendedName>
</protein>
<proteinExistence type="inferred from homology"/>
<name>COMB_PROM3</name>
<sequence length="243" mass="26204">MQLAYFHVAADVPQGAEPDAAVVIDVLRATTTIAWALNNGAEAVETFADLDQLRQSAAQWPESSRLMLGERGGQRIEGFDLGNSPVAVVPEQVAGKRLFMSTTNGTRSLQRVRGVQRLFTLALPNRRAVADHLLMDPPEQLWIVGSGWEGAYSLEDSLAAGALADLLLNAAADEACVVNDELTAALALWQQWKHDPEACLRQASHGQRLIGLGDHDADFRCCAELDRLSVVPVQVKPGVLCAS</sequence>
<accession>A2CAX3</accession>
<reference key="1">
    <citation type="journal article" date="2007" name="PLoS Genet.">
        <title>Patterns and implications of gene gain and loss in the evolution of Prochlorococcus.</title>
        <authorList>
            <person name="Kettler G.C."/>
            <person name="Martiny A.C."/>
            <person name="Huang K."/>
            <person name="Zucker J."/>
            <person name="Coleman M.L."/>
            <person name="Rodrigue S."/>
            <person name="Chen F."/>
            <person name="Lapidus A."/>
            <person name="Ferriera S."/>
            <person name="Johnson J."/>
            <person name="Steglich C."/>
            <person name="Church G.M."/>
            <person name="Richardson P."/>
            <person name="Chisholm S.W."/>
        </authorList>
    </citation>
    <scope>NUCLEOTIDE SEQUENCE [LARGE SCALE GENOMIC DNA]</scope>
    <source>
        <strain>MIT 9303</strain>
    </source>
</reference>